<feature type="chain" id="PRO_0000430033" description="Ktr system potassium uptake protein B">
    <location>
        <begin position="1"/>
        <end position="455"/>
    </location>
</feature>
<feature type="transmembrane region" description="Helical" evidence="1">
    <location>
        <begin position="27"/>
        <end position="47"/>
    </location>
</feature>
<feature type="intramembrane region" evidence="1">
    <location>
        <begin position="54"/>
        <end position="74"/>
    </location>
</feature>
<feature type="transmembrane region" description="Helical" evidence="1">
    <location>
        <begin position="86"/>
        <end position="106"/>
    </location>
</feature>
<feature type="transmembrane region" description="Helical" evidence="1">
    <location>
        <begin position="141"/>
        <end position="161"/>
    </location>
</feature>
<feature type="intramembrane region" evidence="1">
    <location>
        <begin position="169"/>
        <end position="189"/>
    </location>
</feature>
<feature type="transmembrane region" description="Helical" evidence="1">
    <location>
        <begin position="201"/>
        <end position="221"/>
    </location>
</feature>
<feature type="transmembrane region" description="Helical" evidence="1">
    <location>
        <begin position="240"/>
        <end position="260"/>
    </location>
</feature>
<feature type="intramembrane region" evidence="1">
    <location>
        <begin position="291"/>
        <end position="313"/>
    </location>
</feature>
<feature type="transmembrane region" description="Helical" evidence="1">
    <location>
        <begin position="318"/>
        <end position="340"/>
    </location>
</feature>
<feature type="transmembrane region" description="Helical" evidence="1">
    <location>
        <begin position="362"/>
        <end position="382"/>
    </location>
</feature>
<feature type="intramembrane region" evidence="1">
    <location>
        <begin position="390"/>
        <end position="410"/>
    </location>
</feature>
<feature type="transmembrane region" description="Helical" evidence="1">
    <location>
        <begin position="418"/>
        <end position="438"/>
    </location>
</feature>
<feature type="mutagenesis site" description="Decrease in K(+) uptake activity." evidence="3">
    <original>G</original>
    <variation>A</variation>
    <variation>S</variation>
    <location>
        <position position="70"/>
    </location>
</feature>
<feature type="mutagenesis site" description="Exhibits very low K(+) uptake activity." evidence="3">
    <original>G</original>
    <variation>D</variation>
    <location>
        <position position="70"/>
    </location>
</feature>
<feature type="mutagenesis site" description="Decrease in K(+) uptake activity." evidence="3">
    <original>G</original>
    <variation>A</variation>
    <variation>D</variation>
    <location>
        <position position="185"/>
    </location>
</feature>
<feature type="mutagenesis site" description="Exhibits very low K(+) uptake activity." evidence="3">
    <original>G</original>
    <variation>S</variation>
    <location>
        <position position="185"/>
    </location>
</feature>
<feature type="mutagenesis site" description="Decrease in K(+) uptake activity." evidence="2 3">
    <original>G</original>
    <variation>A</variation>
    <location>
        <position position="290"/>
    </location>
</feature>
<feature type="mutagenesis site" description="Lack of K(+) uptake activity." evidence="2 3">
    <original>G</original>
    <variation>D</variation>
    <variation>S</variation>
    <location>
        <position position="290"/>
    </location>
</feature>
<feature type="mutagenesis site" description="Does not affect Vmax for K(+) transport." evidence="5">
    <original>G</original>
    <variation>A</variation>
    <location>
        <position position="314"/>
    </location>
</feature>
<feature type="mutagenesis site" description="Increases Vmax for K(+) transport." evidence="5">
    <original>G</original>
    <variation>A</variation>
    <variation>S</variation>
    <location>
        <position position="316"/>
    </location>
</feature>
<feature type="mutagenesis site" description="Increases Vmax for K(+) transport." evidence="5">
    <original>S</original>
    <variation>C</variation>
    <location>
        <position position="317"/>
    </location>
</feature>
<feature type="mutagenesis site" description="Does not affect Vmax for K(+) transport." evidence="5">
    <original>T</original>
    <variation>C</variation>
    <location>
        <position position="318"/>
    </location>
</feature>
<feature type="mutagenesis site" description="Increases Vmax for K(+) transport." evidence="5">
    <original>T</original>
    <variation>C</variation>
    <location>
        <position position="320"/>
    </location>
</feature>
<feature type="mutagenesis site" description="Increases Vmax for K(+) transport." evidence="5">
    <original>G</original>
    <variation>A</variation>
    <variation>S</variation>
    <location>
        <position position="321"/>
    </location>
</feature>
<feature type="mutagenesis site" description="Increases Vmax for K(+) transport." evidence="5">
    <original>G</original>
    <variation>C</variation>
    <location>
        <position position="322"/>
    </location>
</feature>
<feature type="mutagenesis site" description="Increases Vmax for K(+) transport." evidence="5">
    <original>G</original>
    <variation>S</variation>
    <location>
        <position position="323"/>
    </location>
</feature>
<feature type="mutagenesis site" description="Increases Vmax for K(+) transport." evidence="5">
    <original>I</original>
    <variation>C</variation>
    <location>
        <position position="324"/>
    </location>
</feature>
<feature type="mutagenesis site" description="Increases Vmax for K(+) transport." evidence="5">
    <original>K</original>
    <variation>C</variation>
    <variation>D</variation>
    <variation>H</variation>
    <variation>Q</variation>
    <variation>R</variation>
    <location>
        <position position="325"/>
    </location>
</feature>
<feature type="mutagenesis site" description="Abolishes binding to KtrA. Transports Na(+) faster." evidence="5">
    <location>
        <begin position="326"/>
        <end position="328"/>
    </location>
</feature>
<feature type="mutagenesis site" description="Increases Vmax for K(+) transport." evidence="5">
    <original>V</original>
    <variation>C</variation>
    <variation>S</variation>
    <variation>T</variation>
    <location>
        <position position="326"/>
    </location>
</feature>
<feature type="mutagenesis site" description="Increases Vmax for K(+) transport." evidence="5">
    <original>S</original>
    <variation>C</variation>
    <location>
        <position position="327"/>
    </location>
</feature>
<feature type="mutagenesis site" description="Exhibits very low K(+) uptake activity." evidence="3">
    <original>G</original>
    <variation>A</variation>
    <variation>D</variation>
    <variation>S</variation>
    <location>
        <position position="402"/>
    </location>
</feature>
<feature type="helix" evidence="9">
    <location>
        <begin position="24"/>
        <end position="43"/>
    </location>
</feature>
<feature type="turn" evidence="9">
    <location>
        <begin position="46"/>
        <end position="48"/>
    </location>
</feature>
<feature type="strand" evidence="9">
    <location>
        <begin position="49"/>
        <end position="51"/>
    </location>
</feature>
<feature type="helix" evidence="9">
    <location>
        <begin position="55"/>
        <end position="66"/>
    </location>
</feature>
<feature type="helix" evidence="9">
    <location>
        <begin position="76"/>
        <end position="79"/>
    </location>
</feature>
<feature type="helix" evidence="9">
    <location>
        <begin position="82"/>
        <end position="121"/>
    </location>
</feature>
<feature type="helix" evidence="9">
    <location>
        <begin position="134"/>
        <end position="164"/>
    </location>
</feature>
<feature type="helix" evidence="9">
    <location>
        <begin position="168"/>
        <end position="181"/>
    </location>
</feature>
<feature type="strand" evidence="9">
    <location>
        <begin position="188"/>
        <end position="191"/>
    </location>
</feature>
<feature type="turn" evidence="9">
    <location>
        <begin position="195"/>
        <end position="198"/>
    </location>
</feature>
<feature type="helix" evidence="9">
    <location>
        <begin position="200"/>
        <end position="213"/>
    </location>
</feature>
<feature type="helix" evidence="9">
    <location>
        <begin position="217"/>
        <end position="226"/>
    </location>
</feature>
<feature type="turn" evidence="9">
    <location>
        <begin position="227"/>
        <end position="229"/>
    </location>
</feature>
<feature type="helix" evidence="9">
    <location>
        <begin position="231"/>
        <end position="233"/>
    </location>
</feature>
<feature type="helix" evidence="9">
    <location>
        <begin position="236"/>
        <end position="260"/>
    </location>
</feature>
<feature type="helix" evidence="9">
    <location>
        <begin position="264"/>
        <end position="268"/>
    </location>
</feature>
<feature type="helix" evidence="9">
    <location>
        <begin position="272"/>
        <end position="285"/>
    </location>
</feature>
<feature type="turn" evidence="9">
    <location>
        <begin position="286"/>
        <end position="289"/>
    </location>
</feature>
<feature type="helix" evidence="9">
    <location>
        <begin position="296"/>
        <end position="298"/>
    </location>
</feature>
<feature type="helix" evidence="9">
    <location>
        <begin position="301"/>
        <end position="313"/>
    </location>
</feature>
<feature type="helix" evidence="9">
    <location>
        <begin position="326"/>
        <end position="340"/>
    </location>
</feature>
<feature type="strand" evidence="9">
    <location>
        <begin position="343"/>
        <end position="350"/>
    </location>
</feature>
<feature type="strand" evidence="10">
    <location>
        <begin position="351"/>
        <end position="353"/>
    </location>
</feature>
<feature type="helix" evidence="9">
    <location>
        <begin position="355"/>
        <end position="382"/>
    </location>
</feature>
<feature type="helix" evidence="9">
    <location>
        <begin position="387"/>
        <end position="398"/>
    </location>
</feature>
<feature type="helix" evidence="9">
    <location>
        <begin position="408"/>
        <end position="410"/>
    </location>
</feature>
<feature type="helix" evidence="9">
    <location>
        <begin position="413"/>
        <end position="438"/>
    </location>
</feature>
<keyword id="KW-0002">3D-structure</keyword>
<keyword id="KW-0997">Cell inner membrane</keyword>
<keyword id="KW-1003">Cell membrane</keyword>
<keyword id="KW-0406">Ion transport</keyword>
<keyword id="KW-0472">Membrane</keyword>
<keyword id="KW-0630">Potassium</keyword>
<keyword id="KW-0633">Potassium transport</keyword>
<keyword id="KW-0812">Transmembrane</keyword>
<keyword id="KW-1133">Transmembrane helix</keyword>
<keyword id="KW-0813">Transport</keyword>
<dbReference type="EMBL" id="D89592">
    <property type="protein sequence ID" value="BAA32063.1"/>
    <property type="molecule type" value="Genomic_DNA"/>
</dbReference>
<dbReference type="PDB" id="7ZP9">
    <property type="method" value="EM"/>
    <property type="resolution" value="2.82 A"/>
    <property type="chains" value="C/G/I/M=1-455"/>
</dbReference>
<dbReference type="PDB" id="7ZPO">
    <property type="method" value="EM"/>
    <property type="resolution" value="3.24 A"/>
    <property type="chains" value="I/M=1-455"/>
</dbReference>
<dbReference type="PDB" id="7ZPR">
    <property type="method" value="EM"/>
    <property type="resolution" value="3.56 A"/>
    <property type="chains" value="C/G/I/M=20-455"/>
</dbReference>
<dbReference type="PDBsum" id="7ZP9"/>
<dbReference type="PDBsum" id="7ZPO"/>
<dbReference type="PDBsum" id="7ZPR"/>
<dbReference type="EMDB" id="EMD-14851"/>
<dbReference type="EMDB" id="EMD-14859"/>
<dbReference type="EMDB" id="EMD-14862"/>
<dbReference type="EMDB" id="EMD-3450"/>
<dbReference type="SMR" id="O87953"/>
<dbReference type="STRING" id="663.BAU10_03575"/>
<dbReference type="TCDB" id="2.A.38.4.2">
    <property type="family name" value="the k(+) transporter (trk) family"/>
</dbReference>
<dbReference type="eggNOG" id="COG0168">
    <property type="taxonomic scope" value="Bacteria"/>
</dbReference>
<dbReference type="SABIO-RK" id="O87953"/>
<dbReference type="GO" id="GO:0005886">
    <property type="term" value="C:plasma membrane"/>
    <property type="evidence" value="ECO:0007669"/>
    <property type="project" value="UniProtKB-SubCell"/>
</dbReference>
<dbReference type="GO" id="GO:0015379">
    <property type="term" value="F:potassium:chloride symporter activity"/>
    <property type="evidence" value="ECO:0007669"/>
    <property type="project" value="InterPro"/>
</dbReference>
<dbReference type="InterPro" id="IPR003445">
    <property type="entry name" value="Cat_transpt"/>
</dbReference>
<dbReference type="InterPro" id="IPR004772">
    <property type="entry name" value="TrkH"/>
</dbReference>
<dbReference type="NCBIfam" id="TIGR00933">
    <property type="entry name" value="2a38"/>
    <property type="match status" value="1"/>
</dbReference>
<dbReference type="PANTHER" id="PTHR32024:SF1">
    <property type="entry name" value="KTR SYSTEM POTASSIUM UPTAKE PROTEIN B"/>
    <property type="match status" value="1"/>
</dbReference>
<dbReference type="PANTHER" id="PTHR32024">
    <property type="entry name" value="TRK SYSTEM POTASSIUM UPTAKE PROTEIN TRKG-RELATED"/>
    <property type="match status" value="1"/>
</dbReference>
<dbReference type="Pfam" id="PF02386">
    <property type="entry name" value="TrkH"/>
    <property type="match status" value="1"/>
</dbReference>
<evidence type="ECO:0000255" key="1"/>
<evidence type="ECO:0000269" key="2">
    <source>
    </source>
</evidence>
<evidence type="ECO:0000269" key="3">
    <source>
    </source>
</evidence>
<evidence type="ECO:0000269" key="4">
    <source>
    </source>
</evidence>
<evidence type="ECO:0000269" key="5">
    <source>
    </source>
</evidence>
<evidence type="ECO:0000269" key="6">
    <source>
    </source>
</evidence>
<evidence type="ECO:0000305" key="7"/>
<evidence type="ECO:0000305" key="8">
    <source>
    </source>
</evidence>
<evidence type="ECO:0007829" key="9">
    <source>
        <dbReference type="PDB" id="7ZP9"/>
    </source>
</evidence>
<evidence type="ECO:0007829" key="10">
    <source>
        <dbReference type="PDB" id="7ZPO"/>
    </source>
</evidence>
<organism>
    <name type="scientific">Vibrio alginolyticus</name>
    <dbReference type="NCBI Taxonomy" id="663"/>
    <lineage>
        <taxon>Bacteria</taxon>
        <taxon>Pseudomonadati</taxon>
        <taxon>Pseudomonadota</taxon>
        <taxon>Gammaproteobacteria</taxon>
        <taxon>Vibrionales</taxon>
        <taxon>Vibrionaceae</taxon>
        <taxon>Vibrio</taxon>
    </lineage>
</organism>
<proteinExistence type="evidence at protein level"/>
<accession>O87953</accession>
<gene>
    <name type="primary">ktrB</name>
</gene>
<name>KTRB_VIBAL</name>
<comment type="function">
    <text evidence="2 3 6">Part of the Na(+)-dependent high affinity K(+) uptake system KtrAB. KtrB is the K(+)-translocating subunit.</text>
</comment>
<comment type="activity regulation">
    <text evidence="2">K(+) transport is stimulated by Na(+).</text>
</comment>
<comment type="biophysicochemical properties">
    <kinetics>
        <KM evidence="3">0.025 mM for K(+)</KM>
        <KM evidence="3">6 mM for Na(+)</KM>
        <Vmax evidence="3">200.0 nmol/min/mg enzyme with K(+) as substrate</Vmax>
        <Vmax evidence="3">110.0 nmol/min/mg enzyme with Na(+) as substrate</Vmax>
    </kinetics>
</comment>
<comment type="subunit">
    <text evidence="3 4 5">The uptake system is composed of KtrA and KtrB.</text>
</comment>
<comment type="subcellular location">
    <subcellularLocation>
        <location evidence="2 3 5">Cell inner membrane</location>
        <topology evidence="2 3 5">Multi-pass membrane protein</topology>
    </subcellularLocation>
</comment>
<comment type="domain">
    <text evidence="2 3">Contains four repeated domains, each composed of two transmembrane helices connected by a putative pore loop (p-loop). Four conserved glycine residues in the p-loops are part of a selectivity filter for K(+) ions.</text>
</comment>
<comment type="miscellaneous">
    <text evidence="8">KtrB alone mediates slow Na(+)-independent K(+) uptake, as well as K(+)-independent Na(+) uptake.</text>
</comment>
<comment type="similarity">
    <text evidence="7">Belongs to the TrkH potassium transport family. Ktr (TC 2.A.38.4) subfamily.</text>
</comment>
<reference key="1">
    <citation type="journal article" date="1998" name="J. Bacteriol.">
        <title>KtrAB, a new type of bacterial K(+)-uptake system from Vibrio alginolyticus.</title>
        <authorList>
            <person name="Nakamura T."/>
            <person name="Yuda R."/>
            <person name="Unemoto T."/>
            <person name="Bakker E.P."/>
        </authorList>
    </citation>
    <scope>NUCLEOTIDE SEQUENCE [GENOMIC DNA]</scope>
    <scope>FUNCTION</scope>
    <scope>GENE NAME</scope>
</reference>
<reference key="2">
    <citation type="journal article" date="1999" name="FEBS Lett.">
        <title>Change to alanine of one out of four selectivity filter glycines in KtrB causes a two orders of magnitude decrease in the affinities for both K+ and Na+ of the Na+ dependent K+ uptake system KtrAB from Vibrio alginolyticus.</title>
        <authorList>
            <person name="Tholema N."/>
            <person name="Bakker E.P."/>
            <person name="Suzuki A."/>
            <person name="Nakamura T."/>
        </authorList>
    </citation>
    <scope>FUNCTION</scope>
    <scope>ACTIVITY REGULATION</scope>
    <scope>SUBCELLULAR LOCATION</scope>
    <scope>DOMAIN</scope>
    <scope>MUTAGENESIS OF GLY-290</scope>
</reference>
<reference key="3">
    <citation type="journal article" date="2005" name="J. Biol. Chem.">
        <title>All four putative selectivity filter glycine residues in KtrB are essential for high affinity and selective K+ uptake by the KtrAB system from Vibrio alginolyticus.</title>
        <authorList>
            <person name="Tholema N."/>
            <person name="Vor der Brueggen M."/>
            <person name="Maeser P."/>
            <person name="Nakamura T."/>
            <person name="Schroeder J.I."/>
            <person name="Kobayashi H."/>
            <person name="Uozumi N."/>
            <person name="Bakker E.P."/>
        </authorList>
    </citation>
    <scope>FUNCTION</scope>
    <scope>BIOPHYSICOCHEMICAL PROPERTIES</scope>
    <scope>SUBUNIT</scope>
    <scope>SUBCELLULAR LOCATION</scope>
    <scope>DOMAIN</scope>
    <scope>MUTAGENESIS OF GLY-70; GLY-185; GLY-290 AND GLY-402</scope>
</reference>
<reference key="4">
    <citation type="journal article" date="2007" name="J. Biol. Chem.">
        <title>ATP binding to the KTN/RCK subunit KtrA from the K+ -uptake system KtrAB of Vibrio alginolyticus: its role in the formation of the KtrAB complex and its requirement in vivo.</title>
        <authorList>
            <person name="Kroening N."/>
            <person name="Willenborg M."/>
            <person name="Tholema N."/>
            <person name="Haenelt I."/>
            <person name="Schmid R."/>
            <person name="Bakker E.P."/>
        </authorList>
    </citation>
    <scope>SUBUNIT</scope>
</reference>
<reference key="5">
    <citation type="journal article" date="2010" name="J. Biol. Chem.">
        <title>Gain of function mutations in membrane region M2C2 of KtrB open a gate controlling K+ transport by the KtrAB system from Vibrio alginolyticus.</title>
        <authorList>
            <person name="Haenelt I."/>
            <person name="Loechte S."/>
            <person name="Sundermann L."/>
            <person name="Elbers K."/>
            <person name="Vor der Brueggen M."/>
            <person name="Bakker E.P."/>
        </authorList>
    </citation>
    <scope>SUBUNIT</scope>
    <scope>SUBCELLULAR LOCATION</scope>
    <scope>MUTAGENESIS OF GLY-314; GLY-316; SER-317; THR-318; THR-320; GLY-321; GLY-322; GLY-323; ILE-324; LYS-325; VAL-326; SER-327 AND 326-VAL--THR-328</scope>
</reference>
<protein>
    <recommendedName>
        <fullName>Ktr system potassium uptake protein B</fullName>
        <shortName>K(+)-uptake protein KtrB</shortName>
    </recommendedName>
</protein>
<sequence>MTQFHQRGVFYVPDGKRDKAKGGEPRIILLSFLGVLLPSAVLLTLPVFSVSGLSITDALFTATSAISVTGLGVVDTGQHFTLAGKILLMCLMQIGGLGQMTLSAVLLYMFGVRLSLRQQALAKEALGQERQVNLRRLVKKIVTFALVAEAIGFVFLSYRWVPEMGWQTGMFYALFHSISAFNNAGFALFSDSMMSFVNDPLVSFTLAGLFIFGGLGFTVIGDVWRHWRKGFHFLHIHTKIMLIATPLLLLVGTVLFWLLERHNPNTMGSLTTGGQWLAAFFQSASARTAGFNSVDLTQFTQPALLIMIVLMLIGAGSTSTGGGIKVSTFAVAFMATWTFLRQKKHVVMFKRTVNWPTVTKSLAIIVVSGAILTTAMFLLMLTEKASFDKVMFETISAFATVGLTAGLTAELSEPGKYIMIVVMIIGRIGPLTLAYMLARPEPTLIKYPEDTVLTG</sequence>